<sequence>MAPSAKATAAKKAVVKGTNGKKALKVRTSATFRLPKTLKLARAPKYASKAVPHYNRLDSYKVIEQPITSETAMKKVEDGNILVFQVSMKANKYQIKKAVKELYEVDVLKVNTLVRPNGTKKAYVRLTADYDALDIANRIGYI</sequence>
<organism>
    <name type="scientific">Saccharomyces cerevisiae (strain ATCC 204508 / S288c)</name>
    <name type="common">Baker's yeast</name>
    <dbReference type="NCBI Taxonomy" id="559292"/>
    <lineage>
        <taxon>Eukaryota</taxon>
        <taxon>Fungi</taxon>
        <taxon>Dikarya</taxon>
        <taxon>Ascomycota</taxon>
        <taxon>Saccharomycotina</taxon>
        <taxon>Saccharomycetes</taxon>
        <taxon>Saccharomycetales</taxon>
        <taxon>Saccharomycetaceae</taxon>
        <taxon>Saccharomyces</taxon>
    </lineage>
</organism>
<name>RL25_YEAST</name>
<accession>P04456</accession>
<accession>D6W1U1</accession>
<comment type="function">
    <text evidence="8">Component of the ribosome, a large ribonucleoprotein complex responsible for the synthesis of proteins in the cell. The small ribosomal subunit (SSU) binds messenger RNAs (mRNAs) and translates the encoded message by selecting cognate aminoacyl-transfer RNA (tRNA) molecules. The large subunit (LSU) contains the ribosomal catalytic site termed the peptidyl transferase center (PTC), which catalyzes the formation of peptide bonds, thereby polymerizing the amino acids delivered by tRNAs into a polypeptide chain. The nascent polypeptides leave the ribosome through a tunnel in the LSU and interact with protein factors that function in enzymatic processing, targeting, and the membrane insertion of nascent chains at the exit of the ribosomal tunnel. uL23 is a major component of the universal docking site for these factors at the polypeptide exit tunnel.</text>
</comment>
<comment type="subunit">
    <text evidence="4 9">Component of the large ribosomal subunit (LSU). Mature yeast ribosomes consist of a small (40S) and a large (60S) subunit. The 40S small subunit contains 1 molecule of ribosomal RNA (18S rRNA) and 33 different proteins (encoded by 57 genes). The large 60S subunit contains 3 rRNA molecules (25S, 5.8S and 5S rRNA) and 46 different proteins (encoded by 81 genes). uL23 is associated with the polypeptide exit tunnel (PubMed:22096102, PubMed:9559554).</text>
</comment>
<comment type="interaction">
    <interactant intactId="EBI-15308">
        <id>P04456</id>
    </interactant>
    <interactant intactId="EBI-12077">
        <id>P38861</id>
        <label>NMD3</label>
    </interactant>
    <organismsDiffer>false</organismsDiffer>
    <experiments>2</experiments>
</comment>
<comment type="interaction">
    <interactant intactId="EBI-15308">
        <id>P04456</id>
    </interactant>
    <interactant intactId="EBI-12114">
        <id>Q01560</id>
        <label>NPL3</label>
    </interactant>
    <organismsDiffer>false</organismsDiffer>
    <experiments>2</experiments>
</comment>
<comment type="subcellular location">
    <subcellularLocation>
        <location evidence="4">Cytoplasm</location>
    </subcellularLocation>
</comment>
<comment type="similarity">
    <text evidence="7">Belongs to the universal ribosomal protein uL23 family.</text>
</comment>
<feature type="initiator methionine" description="Removed" evidence="1 2">
    <location>
        <position position="1"/>
    </location>
</feature>
<feature type="chain" id="PRO_0000129483" description="Large ribosomal subunit protein uL23">
    <location>
        <begin position="2"/>
        <end position="142"/>
    </location>
</feature>
<feature type="cross-link" description="Glycyl lysine isopeptide (Lys-Gly) (interchain with G-Cter in SUMO)" evidence="3">
    <location>
        <position position="61"/>
    </location>
</feature>
<feature type="sequence conflict" description="In Ref. 1; CAA25506." evidence="7" ref="1">
    <original>DVLKVNT</original>
    <variation>NI</variation>
    <location>
        <begin position="106"/>
        <end position="112"/>
    </location>
</feature>
<feature type="helix" evidence="11">
    <location>
        <begin position="6"/>
        <end position="15"/>
    </location>
</feature>
<feature type="helix" evidence="10">
    <location>
        <begin position="59"/>
        <end position="62"/>
    </location>
</feature>
<feature type="strand" evidence="10">
    <location>
        <begin position="63"/>
        <end position="66"/>
    </location>
</feature>
<feature type="helix" evidence="10">
    <location>
        <begin position="70"/>
        <end position="79"/>
    </location>
</feature>
<feature type="strand" evidence="10">
    <location>
        <begin position="81"/>
        <end position="86"/>
    </location>
</feature>
<feature type="helix" evidence="10">
    <location>
        <begin position="92"/>
        <end position="103"/>
    </location>
</feature>
<feature type="strand" evidence="11">
    <location>
        <begin position="111"/>
        <end position="114"/>
    </location>
</feature>
<feature type="strand" evidence="11">
    <location>
        <begin position="120"/>
        <end position="123"/>
    </location>
</feature>
<feature type="helix" evidence="10">
    <location>
        <begin position="132"/>
        <end position="137"/>
    </location>
</feature>
<reference key="1">
    <citation type="journal article" date="1984" name="Nucleic Acids Res.">
        <title>Structural comparison of yeast ribosomal protein genes.</title>
        <authorList>
            <person name="Leer R.J."/>
            <person name="van Raamsdonk-Duin M.M.C."/>
            <person name="Hagendoorn M.J.M."/>
            <person name="Mager W.H."/>
            <person name="Planta R.J."/>
        </authorList>
    </citation>
    <scope>NUCLEOTIDE SEQUENCE [GENOMIC DNA]</scope>
    <source>
        <strain>Carlsbergensis</strain>
    </source>
</reference>
<reference key="2">
    <citation type="journal article" date="1996" name="Yeast">
        <title>Sequence analysis of a 13.4 kbp fragment from the left arm of chromosome XV reveals a malate dehydrogenase gene, a putative Ser/Thr protein kinase, the ribosomal L25 gene and four new open reading frames.</title>
        <authorList>
            <person name="Casamayor A."/>
            <person name="Khalid H."/>
            <person name="Balcells L."/>
            <person name="Aldea M."/>
            <person name="Casas C."/>
            <person name="Herrero E."/>
            <person name="Arino J."/>
        </authorList>
    </citation>
    <scope>NUCLEOTIDE SEQUENCE [GENOMIC DNA]</scope>
    <source>
        <strain>ATCC 96604 / S288c / FY1679</strain>
    </source>
</reference>
<reference key="3">
    <citation type="journal article" date="1997" name="Nature">
        <title>The nucleotide sequence of Saccharomyces cerevisiae chromosome XV.</title>
        <authorList>
            <person name="Dujon B."/>
            <person name="Albermann K."/>
            <person name="Aldea M."/>
            <person name="Alexandraki D."/>
            <person name="Ansorge W."/>
            <person name="Arino J."/>
            <person name="Benes V."/>
            <person name="Bohn C."/>
            <person name="Bolotin-Fukuhara M."/>
            <person name="Bordonne R."/>
            <person name="Boyer J."/>
            <person name="Camasses A."/>
            <person name="Casamayor A."/>
            <person name="Casas C."/>
            <person name="Cheret G."/>
            <person name="Cziepluch C."/>
            <person name="Daignan-Fornier B."/>
            <person name="Dang V.-D."/>
            <person name="de Haan M."/>
            <person name="Delius H."/>
            <person name="Durand P."/>
            <person name="Fairhead C."/>
            <person name="Feldmann H."/>
            <person name="Gaillon L."/>
            <person name="Galisson F."/>
            <person name="Gamo F.-J."/>
            <person name="Gancedo C."/>
            <person name="Goffeau A."/>
            <person name="Goulding S.E."/>
            <person name="Grivell L.A."/>
            <person name="Habbig B."/>
            <person name="Hand N.J."/>
            <person name="Hani J."/>
            <person name="Hattenhorst U."/>
            <person name="Hebling U."/>
            <person name="Hernando Y."/>
            <person name="Herrero E."/>
            <person name="Heumann K."/>
            <person name="Hiesel R."/>
            <person name="Hilger F."/>
            <person name="Hofmann B."/>
            <person name="Hollenberg C.P."/>
            <person name="Hughes B."/>
            <person name="Jauniaux J.-C."/>
            <person name="Kalogeropoulos A."/>
            <person name="Katsoulou C."/>
            <person name="Kordes E."/>
            <person name="Lafuente M.J."/>
            <person name="Landt O."/>
            <person name="Louis E.J."/>
            <person name="Maarse A.C."/>
            <person name="Madania A."/>
            <person name="Mannhaupt G."/>
            <person name="Marck C."/>
            <person name="Martin R.P."/>
            <person name="Mewes H.-W."/>
            <person name="Michaux G."/>
            <person name="Paces V."/>
            <person name="Parle-McDermott A.G."/>
            <person name="Pearson B.M."/>
            <person name="Perrin A."/>
            <person name="Pettersson B."/>
            <person name="Poch O."/>
            <person name="Pohl T.M."/>
            <person name="Poirey R."/>
            <person name="Portetelle D."/>
            <person name="Pujol A."/>
            <person name="Purnelle B."/>
            <person name="Ramezani Rad M."/>
            <person name="Rechmann S."/>
            <person name="Schwager C."/>
            <person name="Schweizer M."/>
            <person name="Sor F."/>
            <person name="Sterky F."/>
            <person name="Tarassov I.A."/>
            <person name="Teodoru C."/>
            <person name="Tettelin H."/>
            <person name="Thierry A."/>
            <person name="Tobiasch E."/>
            <person name="Tzermia M."/>
            <person name="Uhlen M."/>
            <person name="Unseld M."/>
            <person name="Valens M."/>
            <person name="Vandenbol M."/>
            <person name="Vetter I."/>
            <person name="Vlcek C."/>
            <person name="Voet M."/>
            <person name="Volckaert G."/>
            <person name="Voss H."/>
            <person name="Wambutt R."/>
            <person name="Wedler H."/>
            <person name="Wiemann S."/>
            <person name="Winsor B."/>
            <person name="Wolfe K.H."/>
            <person name="Zollner A."/>
            <person name="Zumstein E."/>
            <person name="Kleine K."/>
        </authorList>
    </citation>
    <scope>NUCLEOTIDE SEQUENCE [LARGE SCALE GENOMIC DNA]</scope>
    <source>
        <strain>ATCC 204508 / S288c</strain>
    </source>
</reference>
<reference key="4">
    <citation type="journal article" date="2014" name="G3 (Bethesda)">
        <title>The reference genome sequence of Saccharomyces cerevisiae: Then and now.</title>
        <authorList>
            <person name="Engel S.R."/>
            <person name="Dietrich F.S."/>
            <person name="Fisk D.G."/>
            <person name="Binkley G."/>
            <person name="Balakrishnan R."/>
            <person name="Costanzo M.C."/>
            <person name="Dwight S.S."/>
            <person name="Hitz B.C."/>
            <person name="Karra K."/>
            <person name="Nash R.S."/>
            <person name="Weng S."/>
            <person name="Wong E.D."/>
            <person name="Lloyd P."/>
            <person name="Skrzypek M.S."/>
            <person name="Miyasato S.R."/>
            <person name="Simison M."/>
            <person name="Cherry J.M."/>
        </authorList>
    </citation>
    <scope>GENOME REANNOTATION</scope>
    <source>
        <strain>ATCC 204508 / S288c</strain>
    </source>
</reference>
<reference key="5">
    <citation type="journal article" date="1992" name="J. Biol. Chem.">
        <title>NH2-terminal acetylation of ribosomal proteins of Saccharomyces cerevisiae.</title>
        <authorList>
            <person name="Takakura H."/>
            <person name="Tsunasawa S."/>
            <person name="Miyagi M."/>
            <person name="Warner J.R."/>
        </authorList>
    </citation>
    <scope>PROTEIN SEQUENCE OF 2-21</scope>
</reference>
<reference key="6">
    <citation type="journal article" date="1999" name="J. Biol. Chem.">
        <title>The action of N-terminal acetyltransferases on yeast ribosomal proteins.</title>
        <authorList>
            <person name="Arnold R.J."/>
            <person name="Polevoda B."/>
            <person name="Reilly J.P."/>
            <person name="Sherman F."/>
        </authorList>
    </citation>
    <scope>CLEAVAGE OF INITIATOR METHIONINE</scope>
</reference>
<reference key="7">
    <citation type="journal article" date="1998" name="Yeast">
        <title>The list of cytoplasmic ribosomal proteins of Saccharomyces cerevisiae.</title>
        <authorList>
            <person name="Planta R.J."/>
            <person name="Mager W.H."/>
        </authorList>
    </citation>
    <scope>NOMENCLATURE</scope>
    <scope>SUBUNIT</scope>
</reference>
<reference key="8">
    <citation type="journal article" date="2007" name="Proc. Natl. Acad. Sci. U.S.A.">
        <title>Analysis of phosphorylation sites on proteins from Saccharomyces cerevisiae by electron transfer dissociation (ETD) mass spectrometry.</title>
        <authorList>
            <person name="Chi A."/>
            <person name="Huttenhower C."/>
            <person name="Geer L.Y."/>
            <person name="Coon J.J."/>
            <person name="Syka J.E.P."/>
            <person name="Bai D.L."/>
            <person name="Shabanowitz J."/>
            <person name="Burke D.J."/>
            <person name="Troyanskaya O.G."/>
            <person name="Hunt D.F."/>
        </authorList>
    </citation>
    <scope>IDENTIFICATION BY MASS SPECTROMETRY [LARGE SCALE ANALYSIS]</scope>
</reference>
<reference key="9">
    <citation type="journal article" date="2008" name="Mol. Cell. Proteomics">
        <title>A multidimensional chromatography technology for in-depth phosphoproteome analysis.</title>
        <authorList>
            <person name="Albuquerque C.P."/>
            <person name="Smolka M.B."/>
            <person name="Payne S.H."/>
            <person name="Bafna V."/>
            <person name="Eng J."/>
            <person name="Zhou H."/>
        </authorList>
    </citation>
    <scope>IDENTIFICATION BY MASS SPECTROMETRY [LARGE SCALE ANALYSIS]</scope>
</reference>
<reference key="10">
    <citation type="journal article" date="2012" name="Proc. Natl. Acad. Sci. U.S.A.">
        <title>N-terminal acetylome analyses and functional insights of the N-terminal acetyltransferase NatB.</title>
        <authorList>
            <person name="Van Damme P."/>
            <person name="Lasa M."/>
            <person name="Polevoda B."/>
            <person name="Gazquez C."/>
            <person name="Elosegui-Artola A."/>
            <person name="Kim D.S."/>
            <person name="De Juan-Pardo E."/>
            <person name="Demeyer K."/>
            <person name="Hole K."/>
            <person name="Larrea E."/>
            <person name="Timmerman E."/>
            <person name="Prieto J."/>
            <person name="Arnesen T."/>
            <person name="Sherman F."/>
            <person name="Gevaert K."/>
            <person name="Aldabe R."/>
        </authorList>
    </citation>
    <scope>IDENTIFICATION BY MASS SPECTROMETRY [LARGE SCALE ANALYSIS]</scope>
</reference>
<reference key="11">
    <citation type="journal article" date="2012" name="Proteomics">
        <title>Sites of ubiquitin attachment in Saccharomyces cerevisiae.</title>
        <authorList>
            <person name="Starita L.M."/>
            <person name="Lo R.S."/>
            <person name="Eng J.K."/>
            <person name="von Haller P.D."/>
            <person name="Fields S."/>
        </authorList>
    </citation>
    <scope>IDENTIFICATION BY MASS SPECTROMETRY [LARGE SCALE ANALYSIS]</scope>
</reference>
<reference key="12">
    <citation type="journal article" date="2014" name="Curr. Opin. Struct. Biol.">
        <title>A new system for naming ribosomal proteins.</title>
        <authorList>
            <person name="Ban N."/>
            <person name="Beckmann R."/>
            <person name="Cate J.H.D."/>
            <person name="Dinman J.D."/>
            <person name="Dragon F."/>
            <person name="Ellis S.R."/>
            <person name="Lafontaine D.L.J."/>
            <person name="Lindahl L."/>
            <person name="Liljas A."/>
            <person name="Lipton J.M."/>
            <person name="McAlear M.A."/>
            <person name="Moore P.B."/>
            <person name="Noller H.F."/>
            <person name="Ortega J."/>
            <person name="Panse V.G."/>
            <person name="Ramakrishnan V."/>
            <person name="Spahn C.M.T."/>
            <person name="Steitz T.A."/>
            <person name="Tchorzewski M."/>
            <person name="Tollervey D."/>
            <person name="Warren A.J."/>
            <person name="Williamson J.R."/>
            <person name="Wilson D."/>
            <person name="Yonath A."/>
            <person name="Yusupov M."/>
        </authorList>
    </citation>
    <scope>NOMENCLATURE</scope>
</reference>
<reference key="13">
    <citation type="journal article" date="2001" name="Cell">
        <title>Structure of the 80S ribosome from Saccharomyces cerevisiae -- tRNA-ribosome and subunit-subunit interactions.</title>
        <authorList>
            <person name="Spahn C.M.T."/>
            <person name="Beckmann R."/>
            <person name="Eswar N."/>
            <person name="Penczek P.A."/>
            <person name="Sali A."/>
            <person name="Blobel G."/>
            <person name="Frank J."/>
        </authorList>
    </citation>
    <scope>3D-STRUCTURE MODELING OF 60-136</scope>
    <scope>ELECTRON MICROSCOPY</scope>
</reference>
<reference key="14">
    <citation type="journal article" date="2004" name="EMBO J.">
        <title>Domain movements of elongation factor eEF2 and the eukaryotic 80S ribosome facilitate tRNA translocation.</title>
        <authorList>
            <person name="Spahn C.M.T."/>
            <person name="Gomez-Lorenzo M.G."/>
            <person name="Grassucci R.A."/>
            <person name="Joergensen R."/>
            <person name="Andersen G.R."/>
            <person name="Beckmann R."/>
            <person name="Penczek P.A."/>
            <person name="Ballesta J.P.G."/>
            <person name="Frank J."/>
        </authorList>
    </citation>
    <scope>3D-STRUCTURE MODELING OF 60-142</scope>
    <scope>ELECTRON MICROSCOPY</scope>
</reference>
<reference key="15">
    <citation type="journal article" date="2005" name="Mol. Cell. Proteomics">
        <title>A proteomic strategy for gaining insights into protein sumoylation in yeast.</title>
        <authorList>
            <person name="Denison C."/>
            <person name="Rudner A.D."/>
            <person name="Gerber S.A."/>
            <person name="Bakalarski C.E."/>
            <person name="Moazed D."/>
            <person name="Gygi S.P."/>
        </authorList>
    </citation>
    <scope>SUMOYLATION [LARGE SCALE ANALYSIS] AT LYS-61</scope>
    <scope>IDENTIFICATION BY MASS SPECTROMETRY</scope>
    <source>
        <strain>EJY251-11b</strain>
    </source>
</reference>
<reference key="16">
    <citation type="journal article" date="2010" name="Science">
        <title>Crystal structure of the eukaryotic ribosome.</title>
        <authorList>
            <person name="Ben-Shem A."/>
            <person name="Jenner L."/>
            <person name="Yusupova G."/>
            <person name="Yusupov M."/>
        </authorList>
    </citation>
    <scope>X-RAY CRYSTALLOGRAPHY (4.0 ANGSTROMS) OF 80S RIBOSOME</scope>
</reference>
<reference key="17">
    <citation type="journal article" date="2011" name="Science">
        <title>The structure of the eukaryotic ribosome at 3.0 A resolution.</title>
        <authorList>
            <person name="Ben-Shem A."/>
            <person name="Garreau de Loubresse N."/>
            <person name="Melnikov S."/>
            <person name="Jenner L."/>
            <person name="Yusupova G."/>
            <person name="Yusupov M."/>
        </authorList>
    </citation>
    <scope>X-RAY CRYSTALLOGRAPHY (3.0 ANGSTROMS) OF 80S RIBOSOME</scope>
    <scope>SUBUNIT</scope>
    <scope>SUBCELLULAR LOCATION</scope>
</reference>
<proteinExistence type="evidence at protein level"/>
<keyword id="KW-0002">3D-structure</keyword>
<keyword id="KW-0963">Cytoplasm</keyword>
<keyword id="KW-0903">Direct protein sequencing</keyword>
<keyword id="KW-1017">Isopeptide bond</keyword>
<keyword id="KW-1185">Reference proteome</keyword>
<keyword id="KW-0687">Ribonucleoprotein</keyword>
<keyword id="KW-0689">Ribosomal protein</keyword>
<keyword id="KW-0694">RNA-binding</keyword>
<keyword id="KW-0699">rRNA-binding</keyword>
<keyword id="KW-0832">Ubl conjugation</keyword>
<evidence type="ECO:0000269" key="1">
    <source>
    </source>
</evidence>
<evidence type="ECO:0000269" key="2">
    <source>
    </source>
</evidence>
<evidence type="ECO:0000269" key="3">
    <source>
    </source>
</evidence>
<evidence type="ECO:0000269" key="4">
    <source>
    </source>
</evidence>
<evidence type="ECO:0000303" key="5">
    <source>
    </source>
</evidence>
<evidence type="ECO:0000303" key="6">
    <source>
    </source>
</evidence>
<evidence type="ECO:0000305" key="7"/>
<evidence type="ECO:0000305" key="8">
    <source>
    </source>
</evidence>
<evidence type="ECO:0000305" key="9">
    <source>
    </source>
</evidence>
<evidence type="ECO:0007829" key="10">
    <source>
        <dbReference type="PDB" id="7NAD"/>
    </source>
</evidence>
<evidence type="ECO:0007829" key="11">
    <source>
        <dbReference type="PDB" id="7R6Q"/>
    </source>
</evidence>
<protein>
    <recommendedName>
        <fullName evidence="5">Large ribosomal subunit protein uL23</fullName>
    </recommendedName>
    <alternativeName>
        <fullName evidence="6">60S ribosomal protein L25</fullName>
    </alternativeName>
    <alternativeName>
        <fullName>RP16L</fullName>
    </alternativeName>
    <alternativeName>
        <fullName>YL25</fullName>
    </alternativeName>
    <alternativeName>
        <fullName>YP42'</fullName>
    </alternativeName>
</protein>
<gene>
    <name evidence="6" type="primary">RPL25</name>
    <name type="ordered locus">YOL127W</name>
</gene>
<dbReference type="EMBL" id="U41293">
    <property type="protein sequence ID" value="AAC49465.1"/>
    <property type="molecule type" value="Genomic_DNA"/>
</dbReference>
<dbReference type="EMBL" id="X01014">
    <property type="protein sequence ID" value="CAA25506.1"/>
    <property type="molecule type" value="Genomic_DNA"/>
</dbReference>
<dbReference type="EMBL" id="Z74869">
    <property type="protein sequence ID" value="CAA99146.1"/>
    <property type="molecule type" value="Genomic_DNA"/>
</dbReference>
<dbReference type="EMBL" id="BK006948">
    <property type="protein sequence ID" value="DAA10657.1"/>
    <property type="molecule type" value="Genomic_DNA"/>
</dbReference>
<dbReference type="PIR" id="S63443">
    <property type="entry name" value="R5BY25"/>
</dbReference>
<dbReference type="RefSeq" id="NP_014514.1">
    <property type="nucleotide sequence ID" value="NM_001183381.1"/>
</dbReference>
<dbReference type="PDB" id="2WW9">
    <property type="method" value="EM"/>
    <property type="resolution" value="8.60 A"/>
    <property type="chains" value="K=1-142"/>
</dbReference>
<dbReference type="PDB" id="2WWA">
    <property type="method" value="EM"/>
    <property type="resolution" value="8.90 A"/>
    <property type="chains" value="K=1-142"/>
</dbReference>
<dbReference type="PDB" id="2WWB">
    <property type="method" value="EM"/>
    <property type="resolution" value="6.48 A"/>
    <property type="chains" value="K=1-142"/>
</dbReference>
<dbReference type="PDB" id="3J6X">
    <property type="method" value="EM"/>
    <property type="resolution" value="6.10 A"/>
    <property type="chains" value="65=1-142"/>
</dbReference>
<dbReference type="PDB" id="3J6Y">
    <property type="method" value="EM"/>
    <property type="resolution" value="6.10 A"/>
    <property type="chains" value="65=1-142"/>
</dbReference>
<dbReference type="PDB" id="3J77">
    <property type="method" value="EM"/>
    <property type="resolution" value="6.20 A"/>
    <property type="chains" value="75=1-142"/>
</dbReference>
<dbReference type="PDB" id="3J78">
    <property type="method" value="EM"/>
    <property type="resolution" value="6.30 A"/>
    <property type="chains" value="75=1-142"/>
</dbReference>
<dbReference type="PDB" id="3JCT">
    <property type="method" value="EM"/>
    <property type="resolution" value="3.08 A"/>
    <property type="chains" value="X=1-142"/>
</dbReference>
<dbReference type="PDB" id="4U3M">
    <property type="method" value="X-ray"/>
    <property type="resolution" value="3.00 A"/>
    <property type="chains" value="N5/n5=2-142"/>
</dbReference>
<dbReference type="PDB" id="4U3N">
    <property type="method" value="X-ray"/>
    <property type="resolution" value="3.20 A"/>
    <property type="chains" value="N5/n5=2-142"/>
</dbReference>
<dbReference type="PDB" id="4U3U">
    <property type="method" value="X-ray"/>
    <property type="resolution" value="2.90 A"/>
    <property type="chains" value="N5/n5=2-142"/>
</dbReference>
<dbReference type="PDB" id="4U4N">
    <property type="method" value="X-ray"/>
    <property type="resolution" value="3.10 A"/>
    <property type="chains" value="N5/n5=2-142"/>
</dbReference>
<dbReference type="PDB" id="4U4O">
    <property type="method" value="X-ray"/>
    <property type="resolution" value="3.60 A"/>
    <property type="chains" value="N5/n5=2-142"/>
</dbReference>
<dbReference type="PDB" id="4U4Q">
    <property type="method" value="X-ray"/>
    <property type="resolution" value="3.00 A"/>
    <property type="chains" value="N5/n5=2-142"/>
</dbReference>
<dbReference type="PDB" id="4U4R">
    <property type="method" value="X-ray"/>
    <property type="resolution" value="2.80 A"/>
    <property type="chains" value="N5/n5=2-142"/>
</dbReference>
<dbReference type="PDB" id="4U4U">
    <property type="method" value="X-ray"/>
    <property type="resolution" value="3.00 A"/>
    <property type="chains" value="N5/n5=2-142"/>
</dbReference>
<dbReference type="PDB" id="4U4Y">
    <property type="method" value="X-ray"/>
    <property type="resolution" value="3.20 A"/>
    <property type="chains" value="N5/n5=2-142"/>
</dbReference>
<dbReference type="PDB" id="4U4Z">
    <property type="method" value="X-ray"/>
    <property type="resolution" value="3.10 A"/>
    <property type="chains" value="N5/n5=2-142"/>
</dbReference>
<dbReference type="PDB" id="4U50">
    <property type="method" value="X-ray"/>
    <property type="resolution" value="3.20 A"/>
    <property type="chains" value="N5/n5=2-142"/>
</dbReference>
<dbReference type="PDB" id="4U51">
    <property type="method" value="X-ray"/>
    <property type="resolution" value="3.20 A"/>
    <property type="chains" value="N5/n5=2-142"/>
</dbReference>
<dbReference type="PDB" id="4U52">
    <property type="method" value="X-ray"/>
    <property type="resolution" value="3.00 A"/>
    <property type="chains" value="N5/n5=2-142"/>
</dbReference>
<dbReference type="PDB" id="4U53">
    <property type="method" value="X-ray"/>
    <property type="resolution" value="3.30 A"/>
    <property type="chains" value="N5/n5=2-142"/>
</dbReference>
<dbReference type="PDB" id="4U55">
    <property type="method" value="X-ray"/>
    <property type="resolution" value="3.20 A"/>
    <property type="chains" value="N5/n5=2-142"/>
</dbReference>
<dbReference type="PDB" id="4U56">
    <property type="method" value="X-ray"/>
    <property type="resolution" value="3.45 A"/>
    <property type="chains" value="N5/n5=2-142"/>
</dbReference>
<dbReference type="PDB" id="4U6F">
    <property type="method" value="X-ray"/>
    <property type="resolution" value="3.10 A"/>
    <property type="chains" value="N5/n5=2-142"/>
</dbReference>
<dbReference type="PDB" id="4V4B">
    <property type="method" value="EM"/>
    <property type="resolution" value="11.70 A"/>
    <property type="chains" value="BT=60-142"/>
</dbReference>
<dbReference type="PDB" id="4V5Z">
    <property type="method" value="EM"/>
    <property type="resolution" value="8.70 A"/>
    <property type="chains" value="Bs=4-142"/>
</dbReference>
<dbReference type="PDB" id="4V6I">
    <property type="method" value="EM"/>
    <property type="resolution" value="8.80 A"/>
    <property type="chains" value="BX=1-142"/>
</dbReference>
<dbReference type="PDB" id="4V7F">
    <property type="method" value="EM"/>
    <property type="resolution" value="8.70 A"/>
    <property type="chains" value="W=1-142"/>
</dbReference>
<dbReference type="PDB" id="4V7R">
    <property type="method" value="X-ray"/>
    <property type="resolution" value="4.00 A"/>
    <property type="chains" value="BW/DW=1-142"/>
</dbReference>
<dbReference type="PDB" id="4V88">
    <property type="method" value="X-ray"/>
    <property type="resolution" value="3.00 A"/>
    <property type="chains" value="BX/DX=1-142"/>
</dbReference>
<dbReference type="PDB" id="4V8T">
    <property type="method" value="EM"/>
    <property type="resolution" value="8.10 A"/>
    <property type="chains" value="X=1-142"/>
</dbReference>
<dbReference type="PDB" id="4V8Y">
    <property type="method" value="EM"/>
    <property type="resolution" value="4.30 A"/>
    <property type="chains" value="BX=2-142"/>
</dbReference>
<dbReference type="PDB" id="4V8Z">
    <property type="method" value="EM"/>
    <property type="resolution" value="6.60 A"/>
    <property type="chains" value="BX=2-142"/>
</dbReference>
<dbReference type="PDB" id="4V91">
    <property type="method" value="EM"/>
    <property type="resolution" value="3.70 A"/>
    <property type="chains" value="X=1-142"/>
</dbReference>
<dbReference type="PDB" id="5APN">
    <property type="method" value="EM"/>
    <property type="resolution" value="3.91 A"/>
    <property type="chains" value="X=1-142"/>
</dbReference>
<dbReference type="PDB" id="5APO">
    <property type="method" value="EM"/>
    <property type="resolution" value="3.41 A"/>
    <property type="chains" value="X=1-142"/>
</dbReference>
<dbReference type="PDB" id="5DAT">
    <property type="method" value="X-ray"/>
    <property type="resolution" value="3.15 A"/>
    <property type="chains" value="N5/n5=2-142"/>
</dbReference>
<dbReference type="PDB" id="5DC3">
    <property type="method" value="X-ray"/>
    <property type="resolution" value="3.25 A"/>
    <property type="chains" value="N5/n5=2-142"/>
</dbReference>
<dbReference type="PDB" id="5DGE">
    <property type="method" value="X-ray"/>
    <property type="resolution" value="3.45 A"/>
    <property type="chains" value="N5/n5=2-142"/>
</dbReference>
<dbReference type="PDB" id="5DGF">
    <property type="method" value="X-ray"/>
    <property type="resolution" value="3.30 A"/>
    <property type="chains" value="N5/n5=2-142"/>
</dbReference>
<dbReference type="PDB" id="5DGV">
    <property type="method" value="X-ray"/>
    <property type="resolution" value="3.10 A"/>
    <property type="chains" value="N5/n5=2-142"/>
</dbReference>
<dbReference type="PDB" id="5FCI">
    <property type="method" value="X-ray"/>
    <property type="resolution" value="3.40 A"/>
    <property type="chains" value="N5/n5=2-142"/>
</dbReference>
<dbReference type="PDB" id="5FCJ">
    <property type="method" value="X-ray"/>
    <property type="resolution" value="3.10 A"/>
    <property type="chains" value="N5/n5=2-142"/>
</dbReference>
<dbReference type="PDB" id="5GAK">
    <property type="method" value="EM"/>
    <property type="resolution" value="3.88 A"/>
    <property type="chains" value="Z=1-142"/>
</dbReference>
<dbReference type="PDB" id="5H4P">
    <property type="method" value="EM"/>
    <property type="resolution" value="3.07 A"/>
    <property type="chains" value="X=1-142"/>
</dbReference>
<dbReference type="PDB" id="5I4L">
    <property type="method" value="X-ray"/>
    <property type="resolution" value="3.10 A"/>
    <property type="chains" value="N5/n5=22-142"/>
</dbReference>
<dbReference type="PDB" id="5JCS">
    <property type="method" value="EM"/>
    <property type="resolution" value="9.50 A"/>
    <property type="chains" value="X=1-142"/>
</dbReference>
<dbReference type="PDB" id="5JUO">
    <property type="method" value="EM"/>
    <property type="resolution" value="4.00 A"/>
    <property type="chains" value="CA=1-142"/>
</dbReference>
<dbReference type="PDB" id="5JUP">
    <property type="method" value="EM"/>
    <property type="resolution" value="3.50 A"/>
    <property type="chains" value="CA=1-142"/>
</dbReference>
<dbReference type="PDB" id="5JUS">
    <property type="method" value="EM"/>
    <property type="resolution" value="4.20 A"/>
    <property type="chains" value="CA=1-142"/>
</dbReference>
<dbReference type="PDB" id="5JUT">
    <property type="method" value="EM"/>
    <property type="resolution" value="4.00 A"/>
    <property type="chains" value="CA=1-142"/>
</dbReference>
<dbReference type="PDB" id="5JUU">
    <property type="method" value="EM"/>
    <property type="resolution" value="4.00 A"/>
    <property type="chains" value="CA=1-142"/>
</dbReference>
<dbReference type="PDB" id="5LYB">
    <property type="method" value="X-ray"/>
    <property type="resolution" value="3.25 A"/>
    <property type="chains" value="N5/n5=22-142"/>
</dbReference>
<dbReference type="PDB" id="5M1J">
    <property type="method" value="EM"/>
    <property type="resolution" value="3.30 A"/>
    <property type="chains" value="X5=22-142"/>
</dbReference>
<dbReference type="PDB" id="5MC6">
    <property type="method" value="EM"/>
    <property type="resolution" value="3.80 A"/>
    <property type="chains" value="AH=1-142"/>
</dbReference>
<dbReference type="PDB" id="5MEI">
    <property type="method" value="X-ray"/>
    <property type="resolution" value="3.50 A"/>
    <property type="chains" value="8/CZ=22-142"/>
</dbReference>
<dbReference type="PDB" id="5NDG">
    <property type="method" value="X-ray"/>
    <property type="resolution" value="3.70 A"/>
    <property type="chains" value="N5/n5=22-142"/>
</dbReference>
<dbReference type="PDB" id="5NDV">
    <property type="method" value="X-ray"/>
    <property type="resolution" value="3.30 A"/>
    <property type="chains" value="N5/n5=23-142"/>
</dbReference>
<dbReference type="PDB" id="5NDW">
    <property type="method" value="X-ray"/>
    <property type="resolution" value="3.70 A"/>
    <property type="chains" value="N5/n5=22-142"/>
</dbReference>
<dbReference type="PDB" id="5OBM">
    <property type="method" value="X-ray"/>
    <property type="resolution" value="3.40 A"/>
    <property type="chains" value="N5/n5=22-142"/>
</dbReference>
<dbReference type="PDB" id="5ON6">
    <property type="method" value="X-ray"/>
    <property type="resolution" value="3.10 A"/>
    <property type="chains" value="8/CZ=22-142"/>
</dbReference>
<dbReference type="PDB" id="5T62">
    <property type="method" value="EM"/>
    <property type="resolution" value="3.30 A"/>
    <property type="chains" value="k=1-142"/>
</dbReference>
<dbReference type="PDB" id="5T6R">
    <property type="method" value="EM"/>
    <property type="resolution" value="4.50 A"/>
    <property type="chains" value="k=1-142"/>
</dbReference>
<dbReference type="PDB" id="5TBW">
    <property type="method" value="X-ray"/>
    <property type="resolution" value="3.00 A"/>
    <property type="chains" value="8/CZ=22-142"/>
</dbReference>
<dbReference type="PDB" id="5TGA">
    <property type="method" value="X-ray"/>
    <property type="resolution" value="3.30 A"/>
    <property type="chains" value="N5/n5=22-142"/>
</dbReference>
<dbReference type="PDB" id="5TGM">
    <property type="method" value="X-ray"/>
    <property type="resolution" value="3.50 A"/>
    <property type="chains" value="N5/n5=22-142"/>
</dbReference>
<dbReference type="PDB" id="6CB1">
    <property type="method" value="EM"/>
    <property type="resolution" value="4.60 A"/>
    <property type="chains" value="X=1-142"/>
</dbReference>
<dbReference type="PDB" id="6ELZ">
    <property type="method" value="EM"/>
    <property type="resolution" value="3.30 A"/>
    <property type="chains" value="X=1-142"/>
</dbReference>
<dbReference type="PDB" id="6EM5">
    <property type="method" value="EM"/>
    <property type="resolution" value="4.30 A"/>
    <property type="chains" value="X=1-142"/>
</dbReference>
<dbReference type="PDB" id="6FT6">
    <property type="method" value="EM"/>
    <property type="resolution" value="3.90 A"/>
    <property type="chains" value="X=1-142"/>
</dbReference>
<dbReference type="PDB" id="6GQ1">
    <property type="method" value="EM"/>
    <property type="resolution" value="4.40 A"/>
    <property type="chains" value="X=22-142"/>
</dbReference>
<dbReference type="PDB" id="6GQB">
    <property type="method" value="EM"/>
    <property type="resolution" value="3.90 A"/>
    <property type="chains" value="X=22-142"/>
</dbReference>
<dbReference type="PDB" id="6GQV">
    <property type="method" value="EM"/>
    <property type="resolution" value="4.00 A"/>
    <property type="chains" value="X=22-142"/>
</dbReference>
<dbReference type="PDB" id="6HD7">
    <property type="method" value="EM"/>
    <property type="resolution" value="3.40 A"/>
    <property type="chains" value="Z=1-142"/>
</dbReference>
<dbReference type="PDB" id="6HHQ">
    <property type="method" value="X-ray"/>
    <property type="resolution" value="3.10 A"/>
    <property type="chains" value="8/CZ=1-142"/>
</dbReference>
<dbReference type="PDB" id="6I7O">
    <property type="method" value="EM"/>
    <property type="resolution" value="5.30 A"/>
    <property type="chains" value="AH/XH=23-142"/>
</dbReference>
<dbReference type="PDB" id="6M62">
    <property type="method" value="EM"/>
    <property type="resolution" value="3.20 A"/>
    <property type="chains" value="X=1-142"/>
</dbReference>
<dbReference type="PDB" id="6N8J">
    <property type="method" value="EM"/>
    <property type="resolution" value="3.50 A"/>
    <property type="chains" value="X=1-142"/>
</dbReference>
<dbReference type="PDB" id="6N8K">
    <property type="method" value="EM"/>
    <property type="resolution" value="3.60 A"/>
    <property type="chains" value="X=1-142"/>
</dbReference>
<dbReference type="PDB" id="6N8L">
    <property type="method" value="EM"/>
    <property type="resolution" value="3.60 A"/>
    <property type="chains" value="X=1-142"/>
</dbReference>
<dbReference type="PDB" id="6N8M">
    <property type="method" value="EM"/>
    <property type="resolution" value="3.50 A"/>
    <property type="chains" value="k=1-142"/>
</dbReference>
<dbReference type="PDB" id="6N8N">
    <property type="method" value="EM"/>
    <property type="resolution" value="3.80 A"/>
    <property type="chains" value="k=1-142"/>
</dbReference>
<dbReference type="PDB" id="6N8O">
    <property type="method" value="EM"/>
    <property type="resolution" value="3.50 A"/>
    <property type="chains" value="k=1-142"/>
</dbReference>
<dbReference type="PDB" id="6OIG">
    <property type="method" value="EM"/>
    <property type="resolution" value="3.80 A"/>
    <property type="chains" value="X=22-142"/>
</dbReference>
<dbReference type="PDB" id="6Q8Y">
    <property type="method" value="EM"/>
    <property type="resolution" value="3.10 A"/>
    <property type="chains" value="AH=22-142"/>
</dbReference>
<dbReference type="PDB" id="6QIK">
    <property type="method" value="EM"/>
    <property type="resolution" value="3.10 A"/>
    <property type="chains" value="W=1-142"/>
</dbReference>
<dbReference type="PDB" id="6QT0">
    <property type="method" value="EM"/>
    <property type="resolution" value="3.40 A"/>
    <property type="chains" value="W=1-142"/>
</dbReference>
<dbReference type="PDB" id="6QTZ">
    <property type="method" value="EM"/>
    <property type="resolution" value="3.50 A"/>
    <property type="chains" value="W=1-142"/>
</dbReference>
<dbReference type="PDB" id="6R84">
    <property type="method" value="EM"/>
    <property type="resolution" value="3.60 A"/>
    <property type="chains" value="Z=22-142"/>
</dbReference>
<dbReference type="PDB" id="6R86">
    <property type="method" value="EM"/>
    <property type="resolution" value="3.40 A"/>
    <property type="chains" value="Z=22-142"/>
</dbReference>
<dbReference type="PDB" id="6R87">
    <property type="method" value="EM"/>
    <property type="resolution" value="3.40 A"/>
    <property type="chains" value="Z=22-142"/>
</dbReference>
<dbReference type="PDB" id="6RI5">
    <property type="method" value="EM"/>
    <property type="resolution" value="3.30 A"/>
    <property type="chains" value="W=1-142"/>
</dbReference>
<dbReference type="PDB" id="6RZZ">
    <property type="method" value="EM"/>
    <property type="resolution" value="3.20 A"/>
    <property type="chains" value="W=1-142"/>
</dbReference>
<dbReference type="PDB" id="6S05">
    <property type="method" value="EM"/>
    <property type="resolution" value="3.90 A"/>
    <property type="chains" value="W=1-142"/>
</dbReference>
<dbReference type="PDB" id="6S47">
    <property type="method" value="EM"/>
    <property type="resolution" value="3.28 A"/>
    <property type="chains" value="AZ=2-142"/>
</dbReference>
<dbReference type="PDB" id="6SNT">
    <property type="method" value="EM"/>
    <property type="resolution" value="2.80 A"/>
    <property type="chains" value="as=1-142"/>
</dbReference>
<dbReference type="PDB" id="6SV4">
    <property type="method" value="EM"/>
    <property type="resolution" value="3.30 A"/>
    <property type="chains" value="AH/XH/zH=1-142"/>
</dbReference>
<dbReference type="PDB" id="6T4Q">
    <property type="method" value="EM"/>
    <property type="resolution" value="2.60 A"/>
    <property type="chains" value="LX=22-142"/>
</dbReference>
<dbReference type="PDB" id="6T7I">
    <property type="method" value="EM"/>
    <property type="resolution" value="3.20 A"/>
    <property type="chains" value="LX=1-142"/>
</dbReference>
<dbReference type="PDB" id="6T7T">
    <property type="method" value="EM"/>
    <property type="resolution" value="3.10 A"/>
    <property type="chains" value="LX=1-142"/>
</dbReference>
<dbReference type="PDB" id="6T83">
    <property type="method" value="EM"/>
    <property type="resolution" value="4.00 A"/>
    <property type="chains" value="I/Xy=1-142"/>
</dbReference>
<dbReference type="PDB" id="6TB3">
    <property type="method" value="EM"/>
    <property type="resolution" value="2.80 A"/>
    <property type="chains" value="AH=22-142"/>
</dbReference>
<dbReference type="PDB" id="6TNU">
    <property type="method" value="EM"/>
    <property type="resolution" value="3.10 A"/>
    <property type="chains" value="AH=22-142"/>
</dbReference>
<dbReference type="PDB" id="6WOO">
    <property type="method" value="EM"/>
    <property type="resolution" value="2.90 A"/>
    <property type="chains" value="X=22-142"/>
</dbReference>
<dbReference type="PDB" id="6XIQ">
    <property type="method" value="EM"/>
    <property type="resolution" value="4.20 A"/>
    <property type="chains" value="X=1-142"/>
</dbReference>
<dbReference type="PDB" id="6XIR">
    <property type="method" value="EM"/>
    <property type="resolution" value="3.20 A"/>
    <property type="chains" value="X=1-142"/>
</dbReference>
<dbReference type="PDB" id="6YLG">
    <property type="method" value="EM"/>
    <property type="resolution" value="3.00 A"/>
    <property type="chains" value="X=1-142"/>
</dbReference>
<dbReference type="PDB" id="6YLH">
    <property type="method" value="EM"/>
    <property type="resolution" value="3.10 A"/>
    <property type="chains" value="X=1-142"/>
</dbReference>
<dbReference type="PDB" id="6YLX">
    <property type="method" value="EM"/>
    <property type="resolution" value="3.90 A"/>
    <property type="chains" value="X=1-142"/>
</dbReference>
<dbReference type="PDB" id="6YLY">
    <property type="method" value="EM"/>
    <property type="resolution" value="3.80 A"/>
    <property type="chains" value="X=1-142"/>
</dbReference>
<dbReference type="PDB" id="6Z6J">
    <property type="method" value="EM"/>
    <property type="resolution" value="3.40 A"/>
    <property type="chains" value="LX=1-142"/>
</dbReference>
<dbReference type="PDB" id="6Z6K">
    <property type="method" value="EM"/>
    <property type="resolution" value="3.40 A"/>
    <property type="chains" value="LX=1-142"/>
</dbReference>
<dbReference type="PDB" id="7AZY">
    <property type="method" value="EM"/>
    <property type="resolution" value="2.88 A"/>
    <property type="chains" value="I=1-142"/>
</dbReference>
<dbReference type="PDB" id="7B7D">
    <property type="method" value="EM"/>
    <property type="resolution" value="3.30 A"/>
    <property type="chains" value="LT=22-142"/>
</dbReference>
<dbReference type="PDB" id="7BT6">
    <property type="method" value="EM"/>
    <property type="resolution" value="3.12 A"/>
    <property type="chains" value="X=1-142"/>
</dbReference>
<dbReference type="PDB" id="7BTB">
    <property type="method" value="EM"/>
    <property type="resolution" value="3.22 A"/>
    <property type="chains" value="X=1-142"/>
</dbReference>
<dbReference type="PDB" id="7MPI">
    <property type="method" value="EM"/>
    <property type="resolution" value="3.05 A"/>
    <property type="chains" value="AX=22-142"/>
</dbReference>
<dbReference type="PDB" id="7MPJ">
    <property type="method" value="EM"/>
    <property type="resolution" value="2.70 A"/>
    <property type="chains" value="AX=22-142"/>
</dbReference>
<dbReference type="PDB" id="7N8B">
    <property type="method" value="EM"/>
    <property type="resolution" value="3.05 A"/>
    <property type="chains" value="AX=22-142"/>
</dbReference>
<dbReference type="PDB" id="7NAC">
    <property type="method" value="EM"/>
    <property type="resolution" value="3.04 A"/>
    <property type="chains" value="X=1-142"/>
</dbReference>
<dbReference type="PDB" id="7NAD">
    <property type="method" value="EM"/>
    <property type="resolution" value="3.04 A"/>
    <property type="chains" value="X=1-142"/>
</dbReference>
<dbReference type="PDB" id="7NRC">
    <property type="method" value="EM"/>
    <property type="resolution" value="3.90 A"/>
    <property type="chains" value="LZ=22-142"/>
</dbReference>
<dbReference type="PDB" id="7NRD">
    <property type="method" value="EM"/>
    <property type="resolution" value="4.36 A"/>
    <property type="chains" value="LZ=22-142"/>
</dbReference>
<dbReference type="PDB" id="7OF1">
    <property type="method" value="EM"/>
    <property type="resolution" value="3.10 A"/>
    <property type="chains" value="X=1-142"/>
</dbReference>
<dbReference type="PDB" id="7OH3">
    <property type="method" value="EM"/>
    <property type="resolution" value="3.40 A"/>
    <property type="chains" value="X=1-142"/>
</dbReference>
<dbReference type="PDB" id="7OHQ">
    <property type="method" value="EM"/>
    <property type="resolution" value="3.10 A"/>
    <property type="chains" value="X=1-142"/>
</dbReference>
<dbReference type="PDB" id="7OHR">
    <property type="method" value="EM"/>
    <property type="resolution" value="4.72 A"/>
    <property type="chains" value="X=1-142"/>
</dbReference>
<dbReference type="PDB" id="7OHV">
    <property type="method" value="EM"/>
    <property type="resolution" value="3.90 A"/>
    <property type="chains" value="X=1-142"/>
</dbReference>
<dbReference type="PDB" id="7R6Q">
    <property type="method" value="EM"/>
    <property type="resolution" value="2.98 A"/>
    <property type="chains" value="X=1-142"/>
</dbReference>
<dbReference type="PDB" id="7R72">
    <property type="method" value="EM"/>
    <property type="resolution" value="3.07 A"/>
    <property type="chains" value="X=1-142"/>
</dbReference>
<dbReference type="PDB" id="7R7A">
    <property type="method" value="EM"/>
    <property type="resolution" value="3.04 A"/>
    <property type="chains" value="X=1-142"/>
</dbReference>
<dbReference type="PDB" id="7TOO">
    <property type="method" value="EM"/>
    <property type="resolution" value="2.70 A"/>
    <property type="chains" value="AL25=1-142"/>
</dbReference>
<dbReference type="PDB" id="7TOP">
    <property type="method" value="EM"/>
    <property type="resolution" value="2.40 A"/>
    <property type="chains" value="AL25=1-142"/>
</dbReference>
<dbReference type="PDB" id="7U0H">
    <property type="method" value="EM"/>
    <property type="resolution" value="2.76 A"/>
    <property type="chains" value="X=1-142"/>
</dbReference>
<dbReference type="PDB" id="7UG6">
    <property type="method" value="EM"/>
    <property type="resolution" value="2.90 A"/>
    <property type="chains" value="X=1-142"/>
</dbReference>
<dbReference type="PDB" id="7UOO">
    <property type="method" value="EM"/>
    <property type="resolution" value="2.34 A"/>
    <property type="chains" value="X=1-142"/>
</dbReference>
<dbReference type="PDB" id="7UQB">
    <property type="method" value="EM"/>
    <property type="resolution" value="2.43 A"/>
    <property type="chains" value="X=1-142"/>
</dbReference>
<dbReference type="PDB" id="7UQZ">
    <property type="method" value="EM"/>
    <property type="resolution" value="2.44 A"/>
    <property type="chains" value="X=1-142"/>
</dbReference>
<dbReference type="PDB" id="7V08">
    <property type="method" value="EM"/>
    <property type="resolution" value="2.36 A"/>
    <property type="chains" value="X=1-142"/>
</dbReference>
<dbReference type="PDB" id="7Z34">
    <property type="method" value="EM"/>
    <property type="resolution" value="3.80 A"/>
    <property type="chains" value="X=1-142"/>
</dbReference>
<dbReference type="PDB" id="7ZPQ">
    <property type="method" value="EM"/>
    <property type="resolution" value="3.47 A"/>
    <property type="chains" value="BW=22-142"/>
</dbReference>
<dbReference type="PDB" id="7ZRS">
    <property type="method" value="EM"/>
    <property type="resolution" value="4.80 A"/>
    <property type="chains" value="BW=22-142"/>
</dbReference>
<dbReference type="PDB" id="7ZS5">
    <property type="method" value="EM"/>
    <property type="resolution" value="3.20 A"/>
    <property type="chains" value="BY=22-142"/>
</dbReference>
<dbReference type="PDB" id="7ZUW">
    <property type="method" value="EM"/>
    <property type="resolution" value="4.30 A"/>
    <property type="chains" value="BW=22-142"/>
</dbReference>
<dbReference type="PDB" id="7ZUX">
    <property type="method" value="EM"/>
    <property type="resolution" value="2.50 A"/>
    <property type="chains" value="EW=22-142"/>
</dbReference>
<dbReference type="PDB" id="7ZW0">
    <property type="method" value="EM"/>
    <property type="resolution" value="2.40 A"/>
    <property type="chains" value="La=1-142"/>
</dbReference>
<dbReference type="PDB" id="8AAF">
    <property type="method" value="EM"/>
    <property type="resolution" value="2.50 A"/>
    <property type="chains" value="K=1-142"/>
</dbReference>
<dbReference type="PDB" id="8AGT">
    <property type="method" value="EM"/>
    <property type="resolution" value="2.60 A"/>
    <property type="chains" value="K=1-142"/>
</dbReference>
<dbReference type="PDB" id="8AGU">
    <property type="method" value="EM"/>
    <property type="resolution" value="2.70 A"/>
    <property type="chains" value="K=1-142"/>
</dbReference>
<dbReference type="PDB" id="8AGV">
    <property type="method" value="EM"/>
    <property type="resolution" value="2.60 A"/>
    <property type="chains" value="K=1-142"/>
</dbReference>
<dbReference type="PDB" id="8AGW">
    <property type="method" value="EM"/>
    <property type="resolution" value="2.60 A"/>
    <property type="chains" value="K=1-142"/>
</dbReference>
<dbReference type="PDB" id="8AGX">
    <property type="method" value="EM"/>
    <property type="resolution" value="2.40 A"/>
    <property type="chains" value="K=1-142"/>
</dbReference>
<dbReference type="PDB" id="8AGZ">
    <property type="method" value="EM"/>
    <property type="resolution" value="2.60 A"/>
    <property type="chains" value="K=1-142"/>
</dbReference>
<dbReference type="PDB" id="8BIP">
    <property type="method" value="EM"/>
    <property type="resolution" value="3.10 A"/>
    <property type="chains" value="LX=22-142"/>
</dbReference>
<dbReference type="PDB" id="8BJQ">
    <property type="method" value="EM"/>
    <property type="resolution" value="3.80 A"/>
    <property type="chains" value="LX=22-142"/>
</dbReference>
<dbReference type="PDB" id="8BN3">
    <property type="method" value="EM"/>
    <property type="resolution" value="2.40 A"/>
    <property type="chains" value="N5=22-142"/>
</dbReference>
<dbReference type="PDB" id="8BQD">
    <property type="method" value="EM"/>
    <property type="resolution" value="3.90 A"/>
    <property type="chains" value="AH=22-142"/>
</dbReference>
<dbReference type="PDB" id="8BQX">
    <property type="method" value="EM"/>
    <property type="resolution" value="3.80 A"/>
    <property type="chains" value="AH=22-142"/>
</dbReference>
<dbReference type="PDB" id="8CCS">
    <property type="method" value="EM"/>
    <property type="resolution" value="1.97 A"/>
    <property type="chains" value="J=1-142"/>
</dbReference>
<dbReference type="PDB" id="8CDL">
    <property type="method" value="EM"/>
    <property type="resolution" value="2.72 A"/>
    <property type="chains" value="J=1-142"/>
</dbReference>
<dbReference type="PDB" id="8CDR">
    <property type="method" value="EM"/>
    <property type="resolution" value="2.04 A"/>
    <property type="chains" value="J=1-142"/>
</dbReference>
<dbReference type="PDB" id="8CEH">
    <property type="method" value="EM"/>
    <property type="resolution" value="2.05 A"/>
    <property type="chains" value="J=1-142"/>
</dbReference>
<dbReference type="PDB" id="8CF5">
    <property type="method" value="EM"/>
    <property type="resolution" value="2.71 A"/>
    <property type="chains" value="J=1-142"/>
</dbReference>
<dbReference type="PDB" id="8CG8">
    <property type="method" value="EM"/>
    <property type="resolution" value="2.57 A"/>
    <property type="chains" value="J=1-142"/>
</dbReference>
<dbReference type="PDB" id="8CGN">
    <property type="method" value="EM"/>
    <property type="resolution" value="2.28 A"/>
    <property type="chains" value="J=1-142"/>
</dbReference>
<dbReference type="PDB" id="8CIV">
    <property type="method" value="EM"/>
    <property type="resolution" value="2.47 A"/>
    <property type="chains" value="J=1-142"/>
</dbReference>
<dbReference type="PDB" id="8CKU">
    <property type="method" value="EM"/>
    <property type="resolution" value="3.11 A"/>
    <property type="chains" value="J=1-142"/>
</dbReference>
<dbReference type="PDB" id="8CMJ">
    <property type="method" value="EM"/>
    <property type="resolution" value="3.79 A"/>
    <property type="chains" value="J=1-142"/>
</dbReference>
<dbReference type="PDB" id="8EUB">
    <property type="method" value="EM"/>
    <property type="resolution" value="2.52 A"/>
    <property type="chains" value="AX=1-142"/>
</dbReference>
<dbReference type="PDB" id="8EVP">
    <property type="method" value="EM"/>
    <property type="resolution" value="2.38 A"/>
    <property type="chains" value="AX=1-142"/>
</dbReference>
<dbReference type="PDB" id="8EVQ">
    <property type="method" value="EM"/>
    <property type="resolution" value="2.72 A"/>
    <property type="chains" value="AX=1-142"/>
</dbReference>
<dbReference type="PDB" id="8EVR">
    <property type="method" value="EM"/>
    <property type="resolution" value="2.87 A"/>
    <property type="chains" value="AX=1-142"/>
</dbReference>
<dbReference type="PDB" id="8EVS">
    <property type="method" value="EM"/>
    <property type="resolution" value="2.62 A"/>
    <property type="chains" value="AX=1-142"/>
</dbReference>
<dbReference type="PDB" id="8EVT">
    <property type="method" value="EM"/>
    <property type="resolution" value="2.20 A"/>
    <property type="chains" value="AX=1-142"/>
</dbReference>
<dbReference type="PDB" id="8EWB">
    <property type="method" value="EM"/>
    <property type="resolution" value="2.87 A"/>
    <property type="chains" value="AX=1-142"/>
</dbReference>
<dbReference type="PDB" id="8EWC">
    <property type="method" value="EM"/>
    <property type="resolution" value="2.45 A"/>
    <property type="chains" value="AX=1-142"/>
</dbReference>
<dbReference type="PDB" id="8HFR">
    <property type="method" value="EM"/>
    <property type="resolution" value="2.64 A"/>
    <property type="chains" value="Xc=1-142"/>
</dbReference>
<dbReference type="PDB" id="8K2D">
    <property type="method" value="EM"/>
    <property type="resolution" value="3.20 A"/>
    <property type="chains" value="LX=1-142"/>
</dbReference>
<dbReference type="PDB" id="8K82">
    <property type="method" value="EM"/>
    <property type="resolution" value="3.00 A"/>
    <property type="chains" value="LX=1-142"/>
</dbReference>
<dbReference type="PDB" id="8P4V">
    <property type="method" value="X-ray"/>
    <property type="resolution" value="3.16 A"/>
    <property type="chains" value="8/CZ=1-142"/>
</dbReference>
<dbReference type="PDB" id="8P8M">
    <property type="method" value="EM"/>
    <property type="resolution" value="2.66 A"/>
    <property type="chains" value="QX=1-142"/>
</dbReference>
<dbReference type="PDB" id="8P8N">
    <property type="method" value="EM"/>
    <property type="resolution" value="2.15 A"/>
    <property type="chains" value="QX=1-142"/>
</dbReference>
<dbReference type="PDB" id="8P8U">
    <property type="method" value="EM"/>
    <property type="resolution" value="2.23 A"/>
    <property type="chains" value="QX=1-142"/>
</dbReference>
<dbReference type="PDB" id="8P9A">
    <property type="method" value="X-ray"/>
    <property type="resolution" value="2.90 A"/>
    <property type="chains" value="8/CZ=1-142"/>
</dbReference>
<dbReference type="PDB" id="8PFR">
    <property type="method" value="EM"/>
    <property type="resolution" value="2.15 A"/>
    <property type="chains" value="QX=1-142"/>
</dbReference>
<dbReference type="PDB" id="8T2X">
    <property type="method" value="EM"/>
    <property type="resolution" value="2.46 A"/>
    <property type="chains" value="AX=1-142"/>
</dbReference>
<dbReference type="PDB" id="8T2Y">
    <property type="method" value="EM"/>
    <property type="resolution" value="2.20 A"/>
    <property type="chains" value="AX=1-142"/>
</dbReference>
<dbReference type="PDB" id="8T2Z">
    <property type="method" value="EM"/>
    <property type="resolution" value="2.40 A"/>
    <property type="chains" value="AX=1-142"/>
</dbReference>
<dbReference type="PDB" id="8T30">
    <property type="method" value="EM"/>
    <property type="resolution" value="2.88 A"/>
    <property type="chains" value="AX=1-142"/>
</dbReference>
<dbReference type="PDB" id="8T3A">
    <property type="method" value="EM"/>
    <property type="resolution" value="2.86 A"/>
    <property type="chains" value="AX=1-142"/>
</dbReference>
<dbReference type="PDB" id="8T3B">
    <property type="method" value="EM"/>
    <property type="resolution" value="3.08 A"/>
    <property type="chains" value="AX=1-142"/>
</dbReference>
<dbReference type="PDB" id="8T3C">
    <property type="method" value="EM"/>
    <property type="resolution" value="3.86 A"/>
    <property type="chains" value="AX=1-142"/>
</dbReference>
<dbReference type="PDB" id="8T3D">
    <property type="method" value="EM"/>
    <property type="resolution" value="2.95 A"/>
    <property type="chains" value="AX=1-142"/>
</dbReference>
<dbReference type="PDB" id="8T3E">
    <property type="method" value="EM"/>
    <property type="resolution" value="3.04 A"/>
    <property type="chains" value="AX=1-142"/>
</dbReference>
<dbReference type="PDB" id="8T3F">
    <property type="method" value="EM"/>
    <property type="resolution" value="3.09 A"/>
    <property type="chains" value="AX=1-142"/>
</dbReference>
<dbReference type="PDB" id="8UT0">
    <property type="method" value="EM"/>
    <property type="resolution" value="3.22 A"/>
    <property type="chains" value="LZ=22-142"/>
</dbReference>
<dbReference type="PDB" id="8UTI">
    <property type="method" value="EM"/>
    <property type="resolution" value="3.13 A"/>
    <property type="chains" value="LZ=22-142"/>
</dbReference>
<dbReference type="PDB" id="8V87">
    <property type="method" value="EM"/>
    <property type="resolution" value="2.66 A"/>
    <property type="chains" value="X=1-142"/>
</dbReference>
<dbReference type="PDB" id="8XU8">
    <property type="method" value="EM"/>
    <property type="resolution" value="3.40 A"/>
    <property type="chains" value="Z=22-142"/>
</dbReference>
<dbReference type="PDB" id="8Y0U">
    <property type="method" value="EM"/>
    <property type="resolution" value="3.59 A"/>
    <property type="chains" value="LX=1-142"/>
</dbReference>
<dbReference type="PDB" id="8YLD">
    <property type="method" value="EM"/>
    <property type="resolution" value="3.90 A"/>
    <property type="chains" value="Z=22-142"/>
</dbReference>
<dbReference type="PDB" id="8YLR">
    <property type="method" value="EM"/>
    <property type="resolution" value="3.90 A"/>
    <property type="chains" value="Z=22-142"/>
</dbReference>
<dbReference type="PDB" id="8Z70">
    <property type="method" value="EM"/>
    <property type="resolution" value="3.20 A"/>
    <property type="chains" value="Z=22-142"/>
</dbReference>
<dbReference type="PDB" id="8Z71">
    <property type="method" value="EM"/>
    <property type="resolution" value="3.60 A"/>
    <property type="chains" value="Z=22-142"/>
</dbReference>
<dbReference type="PDB" id="9F9S">
    <property type="method" value="EM"/>
    <property type="resolution" value="2.90 A"/>
    <property type="chains" value="Lt/Mt=1-142"/>
</dbReference>
<dbReference type="PDBsum" id="2WW9"/>
<dbReference type="PDBsum" id="2WWA"/>
<dbReference type="PDBsum" id="2WWB"/>
<dbReference type="PDBsum" id="3J6X"/>
<dbReference type="PDBsum" id="3J6Y"/>
<dbReference type="PDBsum" id="3J77"/>
<dbReference type="PDBsum" id="3J78"/>
<dbReference type="PDBsum" id="3JCT"/>
<dbReference type="PDBsum" id="4U3M"/>
<dbReference type="PDBsum" id="4U3N"/>
<dbReference type="PDBsum" id="4U3U"/>
<dbReference type="PDBsum" id="4U4N"/>
<dbReference type="PDBsum" id="4U4O"/>
<dbReference type="PDBsum" id="4U4Q"/>
<dbReference type="PDBsum" id="4U4R"/>
<dbReference type="PDBsum" id="4U4U"/>
<dbReference type="PDBsum" id="4U4Y"/>
<dbReference type="PDBsum" id="4U4Z"/>
<dbReference type="PDBsum" id="4U50"/>
<dbReference type="PDBsum" id="4U51"/>
<dbReference type="PDBsum" id="4U52"/>
<dbReference type="PDBsum" id="4U53"/>
<dbReference type="PDBsum" id="4U55"/>
<dbReference type="PDBsum" id="4U56"/>
<dbReference type="PDBsum" id="4U6F"/>
<dbReference type="PDBsum" id="4V4B"/>
<dbReference type="PDBsum" id="4V5Z"/>
<dbReference type="PDBsum" id="4V6I"/>
<dbReference type="PDBsum" id="4V7F"/>
<dbReference type="PDBsum" id="4V7R"/>
<dbReference type="PDBsum" id="4V88"/>
<dbReference type="PDBsum" id="4V8T"/>
<dbReference type="PDBsum" id="4V8Y"/>
<dbReference type="PDBsum" id="4V8Z"/>
<dbReference type="PDBsum" id="4V91"/>
<dbReference type="PDBsum" id="5APN"/>
<dbReference type="PDBsum" id="5APO"/>
<dbReference type="PDBsum" id="5DAT"/>
<dbReference type="PDBsum" id="5DC3"/>
<dbReference type="PDBsum" id="5DGE"/>
<dbReference type="PDBsum" id="5DGF"/>
<dbReference type="PDBsum" id="5DGV"/>
<dbReference type="PDBsum" id="5FCI"/>
<dbReference type="PDBsum" id="5FCJ"/>
<dbReference type="PDBsum" id="5GAK"/>
<dbReference type="PDBsum" id="5H4P"/>
<dbReference type="PDBsum" id="5I4L"/>
<dbReference type="PDBsum" id="5JCS"/>
<dbReference type="PDBsum" id="5JUO"/>
<dbReference type="PDBsum" id="5JUP"/>
<dbReference type="PDBsum" id="5JUS"/>
<dbReference type="PDBsum" id="5JUT"/>
<dbReference type="PDBsum" id="5JUU"/>
<dbReference type="PDBsum" id="5LYB"/>
<dbReference type="PDBsum" id="5M1J"/>
<dbReference type="PDBsum" id="5MC6"/>
<dbReference type="PDBsum" id="5MEI"/>
<dbReference type="PDBsum" id="5NDG"/>
<dbReference type="PDBsum" id="5NDV"/>
<dbReference type="PDBsum" id="5NDW"/>
<dbReference type="PDBsum" id="5OBM"/>
<dbReference type="PDBsum" id="5ON6"/>
<dbReference type="PDBsum" id="5T62"/>
<dbReference type="PDBsum" id="5T6R"/>
<dbReference type="PDBsum" id="5TBW"/>
<dbReference type="PDBsum" id="5TGA"/>
<dbReference type="PDBsum" id="5TGM"/>
<dbReference type="PDBsum" id="6CB1"/>
<dbReference type="PDBsum" id="6ELZ"/>
<dbReference type="PDBsum" id="6EM5"/>
<dbReference type="PDBsum" id="6FT6"/>
<dbReference type="PDBsum" id="6GQ1"/>
<dbReference type="PDBsum" id="6GQB"/>
<dbReference type="PDBsum" id="6GQV"/>
<dbReference type="PDBsum" id="6HD7"/>
<dbReference type="PDBsum" id="6HHQ"/>
<dbReference type="PDBsum" id="6I7O"/>
<dbReference type="PDBsum" id="6M62"/>
<dbReference type="PDBsum" id="6N8J"/>
<dbReference type="PDBsum" id="6N8K"/>
<dbReference type="PDBsum" id="6N8L"/>
<dbReference type="PDBsum" id="6N8M"/>
<dbReference type="PDBsum" id="6N8N"/>
<dbReference type="PDBsum" id="6N8O"/>
<dbReference type="PDBsum" id="6OIG"/>
<dbReference type="PDBsum" id="6Q8Y"/>
<dbReference type="PDBsum" id="6QIK"/>
<dbReference type="PDBsum" id="6QT0"/>
<dbReference type="PDBsum" id="6QTZ"/>
<dbReference type="PDBsum" id="6R84"/>
<dbReference type="PDBsum" id="6R86"/>
<dbReference type="PDBsum" id="6R87"/>
<dbReference type="PDBsum" id="6RI5"/>
<dbReference type="PDBsum" id="6RZZ"/>
<dbReference type="PDBsum" id="6S05"/>
<dbReference type="PDBsum" id="6S47"/>
<dbReference type="PDBsum" id="6SNT"/>
<dbReference type="PDBsum" id="6SV4"/>
<dbReference type="PDBsum" id="6T4Q"/>
<dbReference type="PDBsum" id="6T7I"/>
<dbReference type="PDBsum" id="6T7T"/>
<dbReference type="PDBsum" id="6T83"/>
<dbReference type="PDBsum" id="6TB3"/>
<dbReference type="PDBsum" id="6TNU"/>
<dbReference type="PDBsum" id="6WOO"/>
<dbReference type="PDBsum" id="6XIQ"/>
<dbReference type="PDBsum" id="6XIR"/>
<dbReference type="PDBsum" id="6YLG"/>
<dbReference type="PDBsum" id="6YLH"/>
<dbReference type="PDBsum" id="6YLX"/>
<dbReference type="PDBsum" id="6YLY"/>
<dbReference type="PDBsum" id="6Z6J"/>
<dbReference type="PDBsum" id="6Z6K"/>
<dbReference type="PDBsum" id="7AZY"/>
<dbReference type="PDBsum" id="7B7D"/>
<dbReference type="PDBsum" id="7BT6"/>
<dbReference type="PDBsum" id="7BTB"/>
<dbReference type="PDBsum" id="7MPI"/>
<dbReference type="PDBsum" id="7MPJ"/>
<dbReference type="PDBsum" id="7N8B"/>
<dbReference type="PDBsum" id="7NAC"/>
<dbReference type="PDBsum" id="7NAD"/>
<dbReference type="PDBsum" id="7NRC"/>
<dbReference type="PDBsum" id="7NRD"/>
<dbReference type="PDBsum" id="7OF1"/>
<dbReference type="PDBsum" id="7OH3"/>
<dbReference type="PDBsum" id="7OHQ"/>
<dbReference type="PDBsum" id="7OHR"/>
<dbReference type="PDBsum" id="7OHV"/>
<dbReference type="PDBsum" id="7R6Q"/>
<dbReference type="PDBsum" id="7R72"/>
<dbReference type="PDBsum" id="7R7A"/>
<dbReference type="PDBsum" id="7TOO"/>
<dbReference type="PDBsum" id="7TOP"/>
<dbReference type="PDBsum" id="7U0H"/>
<dbReference type="PDBsum" id="7UG6"/>
<dbReference type="PDBsum" id="7UOO"/>
<dbReference type="PDBsum" id="7UQB"/>
<dbReference type="PDBsum" id="7UQZ"/>
<dbReference type="PDBsum" id="7V08"/>
<dbReference type="PDBsum" id="7Z34"/>
<dbReference type="PDBsum" id="7ZPQ"/>
<dbReference type="PDBsum" id="7ZRS"/>
<dbReference type="PDBsum" id="7ZS5"/>
<dbReference type="PDBsum" id="7ZUW"/>
<dbReference type="PDBsum" id="7ZUX"/>
<dbReference type="PDBsum" id="7ZW0"/>
<dbReference type="PDBsum" id="8AAF"/>
<dbReference type="PDBsum" id="8AGT"/>
<dbReference type="PDBsum" id="8AGU"/>
<dbReference type="PDBsum" id="8AGV"/>
<dbReference type="PDBsum" id="8AGW"/>
<dbReference type="PDBsum" id="8AGX"/>
<dbReference type="PDBsum" id="8AGZ"/>
<dbReference type="PDBsum" id="8BIP"/>
<dbReference type="PDBsum" id="8BJQ"/>
<dbReference type="PDBsum" id="8BN3"/>
<dbReference type="PDBsum" id="8BQD"/>
<dbReference type="PDBsum" id="8BQX"/>
<dbReference type="PDBsum" id="8CCS"/>
<dbReference type="PDBsum" id="8CDL"/>
<dbReference type="PDBsum" id="8CDR"/>
<dbReference type="PDBsum" id="8CEH"/>
<dbReference type="PDBsum" id="8CF5"/>
<dbReference type="PDBsum" id="8CG8"/>
<dbReference type="PDBsum" id="8CGN"/>
<dbReference type="PDBsum" id="8CIV"/>
<dbReference type="PDBsum" id="8CKU"/>
<dbReference type="PDBsum" id="8CMJ"/>
<dbReference type="PDBsum" id="8EUB"/>
<dbReference type="PDBsum" id="8EVP"/>
<dbReference type="PDBsum" id="8EVQ"/>
<dbReference type="PDBsum" id="8EVR"/>
<dbReference type="PDBsum" id="8EVS"/>
<dbReference type="PDBsum" id="8EVT"/>
<dbReference type="PDBsum" id="8EWB"/>
<dbReference type="PDBsum" id="8EWC"/>
<dbReference type="PDBsum" id="8HFR"/>
<dbReference type="PDBsum" id="8K2D"/>
<dbReference type="PDBsum" id="8K82"/>
<dbReference type="PDBsum" id="8P4V"/>
<dbReference type="PDBsum" id="8P8M"/>
<dbReference type="PDBsum" id="8P8N"/>
<dbReference type="PDBsum" id="8P8U"/>
<dbReference type="PDBsum" id="8P9A"/>
<dbReference type="PDBsum" id="8PFR"/>
<dbReference type="PDBsum" id="8T2X"/>
<dbReference type="PDBsum" id="8T2Y"/>
<dbReference type="PDBsum" id="8T2Z"/>
<dbReference type="PDBsum" id="8T30"/>
<dbReference type="PDBsum" id="8T3A"/>
<dbReference type="PDBsum" id="8T3B"/>
<dbReference type="PDBsum" id="8T3C"/>
<dbReference type="PDBsum" id="8T3D"/>
<dbReference type="PDBsum" id="8T3E"/>
<dbReference type="PDBsum" id="8T3F"/>
<dbReference type="PDBsum" id="8UT0"/>
<dbReference type="PDBsum" id="8UTI"/>
<dbReference type="PDBsum" id="8V87"/>
<dbReference type="PDBsum" id="8XU8"/>
<dbReference type="PDBsum" id="8Y0U"/>
<dbReference type="PDBsum" id="8YLD"/>
<dbReference type="PDBsum" id="8YLR"/>
<dbReference type="PDBsum" id="8Z70"/>
<dbReference type="PDBsum" id="8Z71"/>
<dbReference type="PDBsum" id="9F9S"/>
<dbReference type="EMDB" id="EMD-0047"/>
<dbReference type="EMDB" id="EMD-0048"/>
<dbReference type="EMDB" id="EMD-0049"/>
<dbReference type="EMDB" id="EMD-0202"/>
<dbReference type="EMDB" id="EMD-0369"/>
<dbReference type="EMDB" id="EMD-0370"/>
<dbReference type="EMDB" id="EMD-0371"/>
<dbReference type="EMDB" id="EMD-0372"/>
<dbReference type="EMDB" id="EMD-0373"/>
<dbReference type="EMDB" id="EMD-0374"/>
<dbReference type="EMDB" id="EMD-10068"/>
<dbReference type="EMDB" id="EMD-10071"/>
<dbReference type="EMDB" id="EMD-10098"/>
<dbReference type="EMDB" id="EMD-10262"/>
<dbReference type="EMDB" id="EMD-10315"/>
<dbReference type="EMDB" id="EMD-10377"/>
<dbReference type="EMDB" id="EMD-10396"/>
<dbReference type="EMDB" id="EMD-10397"/>
<dbReference type="EMDB" id="EMD-10398"/>
<dbReference type="EMDB" id="EMD-10431"/>
<dbReference type="EMDB" id="EMD-10537"/>
<dbReference type="EMDB" id="EMD-10838"/>
<dbReference type="EMDB" id="EMD-10839"/>
<dbReference type="EMDB" id="EMD-10841"/>
<dbReference type="EMDB" id="EMD-10842"/>
<dbReference type="EMDB" id="EMD-11096"/>
<dbReference type="EMDB" id="EMD-11097"/>
<dbReference type="EMDB" id="EMD-11951"/>
<dbReference type="EMDB" id="EMD-12081"/>
<dbReference type="EMDB" id="EMD-12534"/>
<dbReference type="EMDB" id="EMD-12535"/>
<dbReference type="EMDB" id="EMD-12866"/>
<dbReference type="EMDB" id="EMD-12892"/>
<dbReference type="EMDB" id="EMD-12905"/>
<dbReference type="EMDB" id="EMD-12906"/>
<dbReference type="EMDB" id="EMD-12910"/>
<dbReference type="EMDB" id="EMD-14471"/>
<dbReference type="EMDB" id="EMD-14861"/>
<dbReference type="EMDB" id="EMD-14921"/>
<dbReference type="EMDB" id="EMD-14926"/>
<dbReference type="EMDB" id="EMD-14978"/>
<dbReference type="EMDB" id="EMD-14979"/>
<dbReference type="EMDB" id="EMD-14990"/>
<dbReference type="EMDB" id="EMD-15296"/>
<dbReference type="EMDB" id="EMD-15423"/>
<dbReference type="EMDB" id="EMD-15424"/>
<dbReference type="EMDB" id="EMD-15425"/>
<dbReference type="EMDB" id="EMD-15426"/>
<dbReference type="EMDB" id="EMD-15427"/>
<dbReference type="EMDB" id="EMD-15428"/>
<dbReference type="EMDB" id="EMD-16086"/>
<dbReference type="EMDB" id="EMD-16090"/>
<dbReference type="EMDB" id="EMD-16127"/>
<dbReference type="EMDB" id="EMD-16182"/>
<dbReference type="EMDB" id="EMD-16191"/>
<dbReference type="EMDB" id="EMD-16563"/>
<dbReference type="EMDB" id="EMD-16591"/>
<dbReference type="EMDB" id="EMD-16594"/>
<dbReference type="EMDB" id="EMD-16609"/>
<dbReference type="EMDB" id="EMD-16616"/>
<dbReference type="EMDB" id="EMD-16634"/>
<dbReference type="EMDB" id="EMD-16648"/>
<dbReference type="EMDB" id="EMD-16684"/>
<dbReference type="EMDB" id="EMD-16702"/>
<dbReference type="EMDB" id="EMD-16729"/>
<dbReference type="EMDB" id="EMD-17549"/>
<dbReference type="EMDB" id="EMD-17550"/>
<dbReference type="EMDB" id="EMD-17552"/>
<dbReference type="EMDB" id="EMD-17653"/>
<dbReference type="EMDB" id="EMD-20077"/>
<dbReference type="EMDB" id="EMD-21859"/>
<dbReference type="EMDB" id="EMD-22196"/>
<dbReference type="EMDB" id="EMD-22198"/>
<dbReference type="EMDB" id="EMD-23934"/>
<dbReference type="EMDB" id="EMD-23935"/>
<dbReference type="EMDB" id="EMD-24235"/>
<dbReference type="EMDB" id="EMD-24269"/>
<dbReference type="EMDB" id="EMD-24270"/>
<dbReference type="EMDB" id="EMD-24286"/>
<dbReference type="EMDB" id="EMD-24290"/>
<dbReference type="EMDB" id="EMD-24296"/>
<dbReference type="EMDB" id="EMD-26033"/>
<dbReference type="EMDB" id="EMD-26034"/>
<dbReference type="EMDB" id="EMD-26259"/>
<dbReference type="EMDB" id="EMD-26485"/>
<dbReference type="EMDB" id="EMD-26651"/>
<dbReference type="EMDB" id="EMD-26686"/>
<dbReference type="EMDB" id="EMD-26703"/>
<dbReference type="EMDB" id="EMD-26941"/>
<dbReference type="EMDB" id="EMD-28610"/>
<dbReference type="EMDB" id="EMD-28632"/>
<dbReference type="EMDB" id="EMD-28633"/>
<dbReference type="EMDB" id="EMD-28634"/>
<dbReference type="EMDB" id="EMD-28635"/>
<dbReference type="EMDB" id="EMD-28636"/>
<dbReference type="EMDB" id="EMD-28642"/>
<dbReference type="EMDB" id="EMD-28643"/>
<dbReference type="EMDB" id="EMD-30108"/>
<dbReference type="EMDB" id="EMD-30170"/>
<dbReference type="EMDB" id="EMD-30174"/>
<dbReference type="EMDB" id="EMD-3461"/>
<dbReference type="EMDB" id="EMD-34725"/>
<dbReference type="EMDB" id="EMD-36839"/>
<dbReference type="EMDB" id="EMD-36945"/>
<dbReference type="EMDB" id="EMD-38660"/>
<dbReference type="EMDB" id="EMD-40990"/>
<dbReference type="EMDB" id="EMD-40991"/>
<dbReference type="EMDB" id="EMD-40992"/>
<dbReference type="EMDB" id="EMD-40993"/>
<dbReference type="EMDB" id="EMD-40997"/>
<dbReference type="EMDB" id="EMD-40998"/>
<dbReference type="EMDB" id="EMD-40999"/>
<dbReference type="EMDB" id="EMD-41000"/>
<dbReference type="EMDB" id="EMD-41001"/>
<dbReference type="EMDB" id="EMD-41002"/>
<dbReference type="EMDB" id="EMD-4140"/>
<dbReference type="EMDB" id="EMD-42525"/>
<dbReference type="EMDB" id="EMD-42540"/>
<dbReference type="EMDB" id="EMD-4302"/>
<dbReference type="EMDB" id="EMD-43027"/>
<dbReference type="EMDB" id="EMD-4427"/>
<dbReference type="EMDB" id="EMD-4474"/>
<dbReference type="EMDB" id="EMD-4560"/>
<dbReference type="EMDB" id="EMD-4630"/>
<dbReference type="EMDB" id="EMD-4636"/>
<dbReference type="EMDB" id="EMD-4751"/>
<dbReference type="EMDB" id="EMD-4752"/>
<dbReference type="EMDB" id="EMD-4753"/>
<dbReference type="EMDB" id="EMD-4884"/>
<dbReference type="EMDB" id="EMD-50259"/>
<dbReference type="EMDB" id="EMD-8362"/>
<dbReference type="EMDB" id="EMD-8368"/>
<dbReference type="SMR" id="P04456"/>
<dbReference type="BioGRID" id="34248">
    <property type="interactions" value="639"/>
</dbReference>
<dbReference type="DIP" id="DIP-7137N"/>
<dbReference type="FunCoup" id="P04456">
    <property type="interactions" value="1032"/>
</dbReference>
<dbReference type="IntAct" id="P04456">
    <property type="interactions" value="141"/>
</dbReference>
<dbReference type="MINT" id="P04456"/>
<dbReference type="STRING" id="4932.YOL127W"/>
<dbReference type="iPTMnet" id="P04456"/>
<dbReference type="PaxDb" id="4932-YOL127W"/>
<dbReference type="PeptideAtlas" id="P04456"/>
<dbReference type="TopDownProteomics" id="P04456"/>
<dbReference type="EnsemblFungi" id="YOL127W_mRNA">
    <property type="protein sequence ID" value="YOL127W"/>
    <property type="gene ID" value="YOL127W"/>
</dbReference>
<dbReference type="GeneID" id="853993"/>
<dbReference type="KEGG" id="sce:YOL127W"/>
<dbReference type="AGR" id="SGD:S000005487"/>
<dbReference type="SGD" id="S000005487">
    <property type="gene designation" value="RPL25"/>
</dbReference>
<dbReference type="VEuPathDB" id="FungiDB:YOL127W"/>
<dbReference type="eggNOG" id="KOG1751">
    <property type="taxonomic scope" value="Eukaryota"/>
</dbReference>
<dbReference type="GeneTree" id="ENSGT00940000171037"/>
<dbReference type="HOGENOM" id="CLU_037562_0_1_1"/>
<dbReference type="InParanoid" id="P04456"/>
<dbReference type="OMA" id="RLDHHKV"/>
<dbReference type="OrthoDB" id="1267328at2759"/>
<dbReference type="BioCyc" id="YEAST:G3O-33522-MONOMER"/>
<dbReference type="Reactome" id="R-SCE-156827">
    <property type="pathway name" value="L13a-mediated translational silencing of Ceruloplasmin expression"/>
</dbReference>
<dbReference type="Reactome" id="R-SCE-1799339">
    <property type="pathway name" value="SRP-dependent cotranslational protein targeting to membrane"/>
</dbReference>
<dbReference type="Reactome" id="R-SCE-72689">
    <property type="pathway name" value="Formation of a pool of free 40S subunits"/>
</dbReference>
<dbReference type="Reactome" id="R-SCE-72706">
    <property type="pathway name" value="GTP hydrolysis and joining of the 60S ribosomal subunit"/>
</dbReference>
<dbReference type="Reactome" id="R-SCE-975956">
    <property type="pathway name" value="Nonsense Mediated Decay (NMD) independent of the Exon Junction Complex (EJC)"/>
</dbReference>
<dbReference type="Reactome" id="R-SCE-975957">
    <property type="pathway name" value="Nonsense Mediated Decay (NMD) enhanced by the Exon Junction Complex (EJC)"/>
</dbReference>
<dbReference type="BioGRID-ORCS" id="853993">
    <property type="hits" value="2 hits in 10 CRISPR screens"/>
</dbReference>
<dbReference type="EvolutionaryTrace" id="P04456"/>
<dbReference type="PRO" id="PR:P04456"/>
<dbReference type="Proteomes" id="UP000002311">
    <property type="component" value="Chromosome XV"/>
</dbReference>
<dbReference type="RNAct" id="P04456">
    <property type="molecule type" value="protein"/>
</dbReference>
<dbReference type="GO" id="GO:0005829">
    <property type="term" value="C:cytosol"/>
    <property type="evidence" value="ECO:0000304"/>
    <property type="project" value="Reactome"/>
</dbReference>
<dbReference type="GO" id="GO:0022625">
    <property type="term" value="C:cytosolic large ribosomal subunit"/>
    <property type="evidence" value="ECO:0000314"/>
    <property type="project" value="SGD"/>
</dbReference>
<dbReference type="GO" id="GO:0030687">
    <property type="term" value="C:preribosome, large subunit precursor"/>
    <property type="evidence" value="ECO:0000314"/>
    <property type="project" value="SGD"/>
</dbReference>
<dbReference type="GO" id="GO:0003723">
    <property type="term" value="F:RNA binding"/>
    <property type="evidence" value="ECO:0000314"/>
    <property type="project" value="SGD"/>
</dbReference>
<dbReference type="GO" id="GO:0019843">
    <property type="term" value="F:rRNA binding"/>
    <property type="evidence" value="ECO:0007669"/>
    <property type="project" value="UniProtKB-KW"/>
</dbReference>
<dbReference type="GO" id="GO:0003735">
    <property type="term" value="F:structural constituent of ribosome"/>
    <property type="evidence" value="ECO:0000318"/>
    <property type="project" value="GO_Central"/>
</dbReference>
<dbReference type="GO" id="GO:0002181">
    <property type="term" value="P:cytoplasmic translation"/>
    <property type="evidence" value="ECO:0000305"/>
    <property type="project" value="SGD"/>
</dbReference>
<dbReference type="GO" id="GO:0000027">
    <property type="term" value="P:ribosomal large subunit assembly"/>
    <property type="evidence" value="ECO:0000315"/>
    <property type="project" value="SGD"/>
</dbReference>
<dbReference type="FunFam" id="3.30.70.330:FF:000035">
    <property type="entry name" value="60S ribosomal protein L23a"/>
    <property type="match status" value="1"/>
</dbReference>
<dbReference type="Gene3D" id="3.30.70.330">
    <property type="match status" value="1"/>
</dbReference>
<dbReference type="HAMAP" id="MF_01369_A">
    <property type="entry name" value="Ribosomal_uL23_A"/>
    <property type="match status" value="1"/>
</dbReference>
<dbReference type="InterPro" id="IPR012677">
    <property type="entry name" value="Nucleotide-bd_a/b_plait_sf"/>
</dbReference>
<dbReference type="InterPro" id="IPR013025">
    <property type="entry name" value="Ribosomal_uL23-like"/>
</dbReference>
<dbReference type="InterPro" id="IPR012678">
    <property type="entry name" value="Ribosomal_uL23/eL15/eS24_sf"/>
</dbReference>
<dbReference type="InterPro" id="IPR001014">
    <property type="entry name" value="Ribosomal_uL23_CS"/>
</dbReference>
<dbReference type="InterPro" id="IPR005633">
    <property type="entry name" value="Ribosomal_uL23_N"/>
</dbReference>
<dbReference type="NCBIfam" id="NF011118">
    <property type="entry name" value="PRK14548.1"/>
    <property type="match status" value="1"/>
</dbReference>
<dbReference type="PANTHER" id="PTHR11620">
    <property type="entry name" value="60S RIBOSOMAL PROTEIN L23A"/>
    <property type="match status" value="1"/>
</dbReference>
<dbReference type="Pfam" id="PF00276">
    <property type="entry name" value="Ribosomal_L23"/>
    <property type="match status" value="1"/>
</dbReference>
<dbReference type="Pfam" id="PF03939">
    <property type="entry name" value="Ribosomal_L23eN"/>
    <property type="match status" value="1"/>
</dbReference>
<dbReference type="SUPFAM" id="SSF54189">
    <property type="entry name" value="Ribosomal proteins S24e, L23 and L15e"/>
    <property type="match status" value="1"/>
</dbReference>
<dbReference type="PROSITE" id="PS00050">
    <property type="entry name" value="RIBOSOMAL_L23"/>
    <property type="match status" value="1"/>
</dbReference>